<protein>
    <recommendedName>
        <fullName evidence="1">Ribosomal RNA large subunit methyltransferase H</fullName>
        <ecNumber evidence="1">2.1.1.177</ecNumber>
    </recommendedName>
    <alternativeName>
        <fullName evidence="1">23S rRNA (pseudouridine1915-N3)-methyltransferase</fullName>
    </alternativeName>
    <alternativeName>
        <fullName evidence="1">23S rRNA m3Psi1915 methyltransferase</fullName>
    </alternativeName>
    <alternativeName>
        <fullName evidence="1">rRNA (pseudouridine-N3-)-methyltransferase RlmH</fullName>
    </alternativeName>
</protein>
<name>RLMH_ECO24</name>
<comment type="function">
    <text evidence="1">Specifically methylates the pseudouridine at position 1915 (m3Psi1915) in 23S rRNA.</text>
</comment>
<comment type="catalytic activity">
    <reaction evidence="1">
        <text>pseudouridine(1915) in 23S rRNA + S-adenosyl-L-methionine = N(3)-methylpseudouridine(1915) in 23S rRNA + S-adenosyl-L-homocysteine + H(+)</text>
        <dbReference type="Rhea" id="RHEA:42752"/>
        <dbReference type="Rhea" id="RHEA-COMP:10221"/>
        <dbReference type="Rhea" id="RHEA-COMP:10222"/>
        <dbReference type="ChEBI" id="CHEBI:15378"/>
        <dbReference type="ChEBI" id="CHEBI:57856"/>
        <dbReference type="ChEBI" id="CHEBI:59789"/>
        <dbReference type="ChEBI" id="CHEBI:65314"/>
        <dbReference type="ChEBI" id="CHEBI:74486"/>
        <dbReference type="EC" id="2.1.1.177"/>
    </reaction>
</comment>
<comment type="subunit">
    <text evidence="1">Homodimer.</text>
</comment>
<comment type="subcellular location">
    <subcellularLocation>
        <location evidence="1">Cytoplasm</location>
    </subcellularLocation>
</comment>
<comment type="similarity">
    <text evidence="1">Belongs to the RNA methyltransferase RlmH family.</text>
</comment>
<organism>
    <name type="scientific">Escherichia coli O139:H28 (strain E24377A / ETEC)</name>
    <dbReference type="NCBI Taxonomy" id="331111"/>
    <lineage>
        <taxon>Bacteria</taxon>
        <taxon>Pseudomonadati</taxon>
        <taxon>Pseudomonadota</taxon>
        <taxon>Gammaproteobacteria</taxon>
        <taxon>Enterobacterales</taxon>
        <taxon>Enterobacteriaceae</taxon>
        <taxon>Escherichia</taxon>
    </lineage>
</organism>
<evidence type="ECO:0000255" key="1">
    <source>
        <dbReference type="HAMAP-Rule" id="MF_00658"/>
    </source>
</evidence>
<dbReference type="EC" id="2.1.1.177" evidence="1"/>
<dbReference type="EMBL" id="CP000800">
    <property type="protein sequence ID" value="ABV17005.1"/>
    <property type="molecule type" value="Genomic_DNA"/>
</dbReference>
<dbReference type="RefSeq" id="WP_000776104.1">
    <property type="nucleotide sequence ID" value="NC_009801.1"/>
</dbReference>
<dbReference type="BMRB" id="A7ZJ25"/>
<dbReference type="SMR" id="A7ZJ25"/>
<dbReference type="GeneID" id="93776846"/>
<dbReference type="KEGG" id="ecw:EcE24377A_0662"/>
<dbReference type="HOGENOM" id="CLU_100552_1_0_6"/>
<dbReference type="Proteomes" id="UP000001122">
    <property type="component" value="Chromosome"/>
</dbReference>
<dbReference type="GO" id="GO:0005737">
    <property type="term" value="C:cytoplasm"/>
    <property type="evidence" value="ECO:0007669"/>
    <property type="project" value="UniProtKB-SubCell"/>
</dbReference>
<dbReference type="GO" id="GO:0070038">
    <property type="term" value="F:rRNA (pseudouridine-N3-)-methyltransferase activity"/>
    <property type="evidence" value="ECO:0007669"/>
    <property type="project" value="UniProtKB-UniRule"/>
</dbReference>
<dbReference type="CDD" id="cd18081">
    <property type="entry name" value="RlmH-like"/>
    <property type="match status" value="1"/>
</dbReference>
<dbReference type="FunFam" id="3.40.1280.10:FF:000004">
    <property type="entry name" value="Ribosomal RNA large subunit methyltransferase H"/>
    <property type="match status" value="1"/>
</dbReference>
<dbReference type="Gene3D" id="3.40.1280.10">
    <property type="match status" value="1"/>
</dbReference>
<dbReference type="HAMAP" id="MF_00658">
    <property type="entry name" value="23SrRNA_methyltr_H"/>
    <property type="match status" value="1"/>
</dbReference>
<dbReference type="InterPro" id="IPR029028">
    <property type="entry name" value="Alpha/beta_knot_MTases"/>
</dbReference>
<dbReference type="InterPro" id="IPR003742">
    <property type="entry name" value="RlmH-like"/>
</dbReference>
<dbReference type="InterPro" id="IPR029026">
    <property type="entry name" value="tRNA_m1G_MTases_N"/>
</dbReference>
<dbReference type="NCBIfam" id="NF000984">
    <property type="entry name" value="PRK00103.1-1"/>
    <property type="match status" value="1"/>
</dbReference>
<dbReference type="NCBIfam" id="NF000986">
    <property type="entry name" value="PRK00103.1-4"/>
    <property type="match status" value="1"/>
</dbReference>
<dbReference type="NCBIfam" id="TIGR00246">
    <property type="entry name" value="tRNA_RlmH_YbeA"/>
    <property type="match status" value="1"/>
</dbReference>
<dbReference type="PANTHER" id="PTHR33603">
    <property type="entry name" value="METHYLTRANSFERASE"/>
    <property type="match status" value="1"/>
</dbReference>
<dbReference type="PANTHER" id="PTHR33603:SF1">
    <property type="entry name" value="RIBOSOMAL RNA LARGE SUBUNIT METHYLTRANSFERASE H"/>
    <property type="match status" value="1"/>
</dbReference>
<dbReference type="Pfam" id="PF02590">
    <property type="entry name" value="SPOUT_MTase"/>
    <property type="match status" value="1"/>
</dbReference>
<dbReference type="PIRSF" id="PIRSF004505">
    <property type="entry name" value="MT_bac"/>
    <property type="match status" value="1"/>
</dbReference>
<dbReference type="SUPFAM" id="SSF75217">
    <property type="entry name" value="alpha/beta knot"/>
    <property type="match status" value="1"/>
</dbReference>
<gene>
    <name evidence="1" type="primary">rlmH</name>
    <name type="ordered locus">EcE24377A_0662</name>
</gene>
<reference key="1">
    <citation type="journal article" date="2008" name="J. Bacteriol.">
        <title>The pangenome structure of Escherichia coli: comparative genomic analysis of E. coli commensal and pathogenic isolates.</title>
        <authorList>
            <person name="Rasko D.A."/>
            <person name="Rosovitz M.J."/>
            <person name="Myers G.S.A."/>
            <person name="Mongodin E.F."/>
            <person name="Fricke W.F."/>
            <person name="Gajer P."/>
            <person name="Crabtree J."/>
            <person name="Sebaihia M."/>
            <person name="Thomson N.R."/>
            <person name="Chaudhuri R."/>
            <person name="Henderson I.R."/>
            <person name="Sperandio V."/>
            <person name="Ravel J."/>
        </authorList>
    </citation>
    <scope>NUCLEOTIDE SEQUENCE [LARGE SCALE GENOMIC DNA]</scope>
    <source>
        <strain>E24377A / ETEC</strain>
    </source>
</reference>
<sequence>MKLQLVAVGTKMPDWVQTGFTEYLRRFPKDMPFELIEIPAGKRGKNADIKRILDKEGEQMLAAAGKNRIVTLDIPGKPWDTPQLAAELERWKLDGRDVSLLIGGPEGLSPACKAAAEQSWSLSALTLPHPLVRVLVAESLYRAWSITTNHPYHRE</sequence>
<keyword id="KW-0963">Cytoplasm</keyword>
<keyword id="KW-0489">Methyltransferase</keyword>
<keyword id="KW-1185">Reference proteome</keyword>
<keyword id="KW-0698">rRNA processing</keyword>
<keyword id="KW-0949">S-adenosyl-L-methionine</keyword>
<keyword id="KW-0808">Transferase</keyword>
<accession>A7ZJ25</accession>
<proteinExistence type="inferred from homology"/>
<feature type="chain" id="PRO_1000061779" description="Ribosomal RNA large subunit methyltransferase H">
    <location>
        <begin position="1"/>
        <end position="155"/>
    </location>
</feature>
<feature type="binding site" evidence="1">
    <location>
        <position position="72"/>
    </location>
    <ligand>
        <name>S-adenosyl-L-methionine</name>
        <dbReference type="ChEBI" id="CHEBI:59789"/>
    </ligand>
</feature>
<feature type="binding site" evidence="1">
    <location>
        <position position="103"/>
    </location>
    <ligand>
        <name>S-adenosyl-L-methionine</name>
        <dbReference type="ChEBI" id="CHEBI:59789"/>
    </ligand>
</feature>
<feature type="binding site" evidence="1">
    <location>
        <begin position="122"/>
        <end position="127"/>
    </location>
    <ligand>
        <name>S-adenosyl-L-methionine</name>
        <dbReference type="ChEBI" id="CHEBI:59789"/>
    </ligand>
</feature>